<sequence>MPSLSKEAALVHDALVARGLETPLRPPMDELDNETRKSLIAGHMTEIMQLLNLDLSDDSLMETPHRIAKMYVDEIFAGLDYANFPKITLIENKMKVDEMVTVRDITLTSTCEHHFVTIDGKATVAYIPKDSVIGLSKINRIVQFFAQRPQVQERLTQQILTALQTLLGTNNVAVSIDAVHYCVKARGIRDATSATTTTSLGGLFKSSQNTRQEFLRAVRHHP</sequence>
<evidence type="ECO:0000255" key="1">
    <source>
        <dbReference type="HAMAP-Rule" id="MF_00223"/>
    </source>
</evidence>
<organism>
    <name type="scientific">Salmonella dublin (strain CT_02021853)</name>
    <dbReference type="NCBI Taxonomy" id="439851"/>
    <lineage>
        <taxon>Bacteria</taxon>
        <taxon>Pseudomonadati</taxon>
        <taxon>Pseudomonadota</taxon>
        <taxon>Gammaproteobacteria</taxon>
        <taxon>Enterobacterales</taxon>
        <taxon>Enterobacteriaceae</taxon>
        <taxon>Salmonella</taxon>
    </lineage>
</organism>
<dbReference type="EC" id="3.5.4.16" evidence="1"/>
<dbReference type="EMBL" id="CP001144">
    <property type="protein sequence ID" value="ACH76970.1"/>
    <property type="molecule type" value="Genomic_DNA"/>
</dbReference>
<dbReference type="RefSeq" id="WP_001139611.1">
    <property type="nucleotide sequence ID" value="NC_011205.1"/>
</dbReference>
<dbReference type="SMR" id="B5FNJ7"/>
<dbReference type="KEGG" id="sed:SeD_A2542"/>
<dbReference type="HOGENOM" id="CLU_049768_3_2_6"/>
<dbReference type="UniPathway" id="UPA00848">
    <property type="reaction ID" value="UER00151"/>
</dbReference>
<dbReference type="Proteomes" id="UP000008322">
    <property type="component" value="Chromosome"/>
</dbReference>
<dbReference type="GO" id="GO:0005737">
    <property type="term" value="C:cytoplasm"/>
    <property type="evidence" value="ECO:0007669"/>
    <property type="project" value="TreeGrafter"/>
</dbReference>
<dbReference type="GO" id="GO:0005525">
    <property type="term" value="F:GTP binding"/>
    <property type="evidence" value="ECO:0007669"/>
    <property type="project" value="UniProtKB-KW"/>
</dbReference>
<dbReference type="GO" id="GO:0003934">
    <property type="term" value="F:GTP cyclohydrolase I activity"/>
    <property type="evidence" value="ECO:0007669"/>
    <property type="project" value="UniProtKB-UniRule"/>
</dbReference>
<dbReference type="GO" id="GO:0008270">
    <property type="term" value="F:zinc ion binding"/>
    <property type="evidence" value="ECO:0007669"/>
    <property type="project" value="UniProtKB-UniRule"/>
</dbReference>
<dbReference type="GO" id="GO:0006730">
    <property type="term" value="P:one-carbon metabolic process"/>
    <property type="evidence" value="ECO:0007669"/>
    <property type="project" value="UniProtKB-UniRule"/>
</dbReference>
<dbReference type="GO" id="GO:0006729">
    <property type="term" value="P:tetrahydrobiopterin biosynthetic process"/>
    <property type="evidence" value="ECO:0007669"/>
    <property type="project" value="TreeGrafter"/>
</dbReference>
<dbReference type="GO" id="GO:0046654">
    <property type="term" value="P:tetrahydrofolate biosynthetic process"/>
    <property type="evidence" value="ECO:0007669"/>
    <property type="project" value="UniProtKB-UniRule"/>
</dbReference>
<dbReference type="CDD" id="cd00642">
    <property type="entry name" value="GTP_cyclohydro1"/>
    <property type="match status" value="1"/>
</dbReference>
<dbReference type="FunFam" id="1.10.286.10:FF:000002">
    <property type="entry name" value="GTP cyclohydrolase 1"/>
    <property type="match status" value="1"/>
</dbReference>
<dbReference type="FunFam" id="3.30.1130.10:FF:000001">
    <property type="entry name" value="GTP cyclohydrolase 1"/>
    <property type="match status" value="1"/>
</dbReference>
<dbReference type="Gene3D" id="1.10.286.10">
    <property type="match status" value="1"/>
</dbReference>
<dbReference type="Gene3D" id="3.30.1130.10">
    <property type="match status" value="1"/>
</dbReference>
<dbReference type="HAMAP" id="MF_00223">
    <property type="entry name" value="FolE"/>
    <property type="match status" value="1"/>
</dbReference>
<dbReference type="InterPro" id="IPR043133">
    <property type="entry name" value="GTP-CH-I_C/QueF"/>
</dbReference>
<dbReference type="InterPro" id="IPR043134">
    <property type="entry name" value="GTP-CH-I_N"/>
</dbReference>
<dbReference type="InterPro" id="IPR001474">
    <property type="entry name" value="GTP_CycHdrlase_I"/>
</dbReference>
<dbReference type="InterPro" id="IPR018234">
    <property type="entry name" value="GTP_CycHdrlase_I_CS"/>
</dbReference>
<dbReference type="InterPro" id="IPR020602">
    <property type="entry name" value="GTP_CycHdrlase_I_dom"/>
</dbReference>
<dbReference type="NCBIfam" id="TIGR00063">
    <property type="entry name" value="folE"/>
    <property type="match status" value="1"/>
</dbReference>
<dbReference type="NCBIfam" id="NF006824">
    <property type="entry name" value="PRK09347.1-1"/>
    <property type="match status" value="1"/>
</dbReference>
<dbReference type="NCBIfam" id="NF006825">
    <property type="entry name" value="PRK09347.1-2"/>
    <property type="match status" value="1"/>
</dbReference>
<dbReference type="NCBIfam" id="NF006826">
    <property type="entry name" value="PRK09347.1-3"/>
    <property type="match status" value="1"/>
</dbReference>
<dbReference type="PANTHER" id="PTHR11109:SF7">
    <property type="entry name" value="GTP CYCLOHYDROLASE 1"/>
    <property type="match status" value="1"/>
</dbReference>
<dbReference type="PANTHER" id="PTHR11109">
    <property type="entry name" value="GTP CYCLOHYDROLASE I"/>
    <property type="match status" value="1"/>
</dbReference>
<dbReference type="Pfam" id="PF01227">
    <property type="entry name" value="GTP_cyclohydroI"/>
    <property type="match status" value="1"/>
</dbReference>
<dbReference type="SUPFAM" id="SSF55620">
    <property type="entry name" value="Tetrahydrobiopterin biosynthesis enzymes-like"/>
    <property type="match status" value="1"/>
</dbReference>
<dbReference type="PROSITE" id="PS00859">
    <property type="entry name" value="GTP_CYCLOHYDROL_1_1"/>
    <property type="match status" value="1"/>
</dbReference>
<dbReference type="PROSITE" id="PS00860">
    <property type="entry name" value="GTP_CYCLOHYDROL_1_2"/>
    <property type="match status" value="1"/>
</dbReference>
<gene>
    <name evidence="1" type="primary">folE</name>
    <name type="ordered locus">SeD_A2542</name>
</gene>
<name>GCH1_SALDC</name>
<reference key="1">
    <citation type="journal article" date="2011" name="J. Bacteriol.">
        <title>Comparative genomics of 28 Salmonella enterica isolates: evidence for CRISPR-mediated adaptive sublineage evolution.</title>
        <authorList>
            <person name="Fricke W.F."/>
            <person name="Mammel M.K."/>
            <person name="McDermott P.F."/>
            <person name="Tartera C."/>
            <person name="White D.G."/>
            <person name="Leclerc J.E."/>
            <person name="Ravel J."/>
            <person name="Cebula T.A."/>
        </authorList>
    </citation>
    <scope>NUCLEOTIDE SEQUENCE [LARGE SCALE GENOMIC DNA]</scope>
    <source>
        <strain>CT_02021853</strain>
    </source>
</reference>
<protein>
    <recommendedName>
        <fullName evidence="1">GTP cyclohydrolase 1</fullName>
        <ecNumber evidence="1">3.5.4.16</ecNumber>
    </recommendedName>
    <alternativeName>
        <fullName evidence="1">GTP cyclohydrolase I</fullName>
        <shortName evidence="1">GTP-CH-I</shortName>
    </alternativeName>
</protein>
<feature type="chain" id="PRO_1000100191" description="GTP cyclohydrolase 1">
    <location>
        <begin position="1"/>
        <end position="222"/>
    </location>
</feature>
<feature type="binding site" evidence="1">
    <location>
        <position position="111"/>
    </location>
    <ligand>
        <name>Zn(2+)</name>
        <dbReference type="ChEBI" id="CHEBI:29105"/>
    </ligand>
</feature>
<feature type="binding site" evidence="1">
    <location>
        <position position="114"/>
    </location>
    <ligand>
        <name>Zn(2+)</name>
        <dbReference type="ChEBI" id="CHEBI:29105"/>
    </ligand>
</feature>
<feature type="binding site" evidence="1">
    <location>
        <position position="182"/>
    </location>
    <ligand>
        <name>Zn(2+)</name>
        <dbReference type="ChEBI" id="CHEBI:29105"/>
    </ligand>
</feature>
<accession>B5FNJ7</accession>
<keyword id="KW-0342">GTP-binding</keyword>
<keyword id="KW-0378">Hydrolase</keyword>
<keyword id="KW-0479">Metal-binding</keyword>
<keyword id="KW-0547">Nucleotide-binding</keyword>
<keyword id="KW-0554">One-carbon metabolism</keyword>
<keyword id="KW-0862">Zinc</keyword>
<comment type="catalytic activity">
    <reaction evidence="1">
        <text>GTP + H2O = 7,8-dihydroneopterin 3'-triphosphate + formate + H(+)</text>
        <dbReference type="Rhea" id="RHEA:17473"/>
        <dbReference type="ChEBI" id="CHEBI:15377"/>
        <dbReference type="ChEBI" id="CHEBI:15378"/>
        <dbReference type="ChEBI" id="CHEBI:15740"/>
        <dbReference type="ChEBI" id="CHEBI:37565"/>
        <dbReference type="ChEBI" id="CHEBI:58462"/>
        <dbReference type="EC" id="3.5.4.16"/>
    </reaction>
</comment>
<comment type="pathway">
    <text evidence="1">Cofactor biosynthesis; 7,8-dihydroneopterin triphosphate biosynthesis; 7,8-dihydroneopterin triphosphate from GTP: step 1/1.</text>
</comment>
<comment type="subunit">
    <text evidence="1">Homomer.</text>
</comment>
<comment type="similarity">
    <text evidence="1">Belongs to the GTP cyclohydrolase I family.</text>
</comment>
<proteinExistence type="inferred from homology"/>